<feature type="chain" id="PRO_0000054654" description="L-fucose dehydrogenase">
    <location>
        <begin position="1"/>
        <end position="270"/>
    </location>
</feature>
<feature type="active site" description="Proton acceptor" evidence="1">
    <location>
        <position position="154"/>
    </location>
</feature>
<feature type="binding site" evidence="4 5 6 7 13 14 15 17 18 19 20 21 22 23 24 25 26 27 28 29 30 31 32 33 34 35 36 37 38 39 40 41 42">
    <location>
        <position position="19"/>
    </location>
    <ligand>
        <name>NAD(+)</name>
        <dbReference type="ChEBI" id="CHEBI:57540"/>
    </ligand>
</feature>
<feature type="binding site" evidence="4 5 6 7 13 14 15 17 18 19 20 21 22 23 24 25 26 27 28 29 30 31 32 33 34 35 36 37 38 39 40 41 42">
    <location>
        <position position="21"/>
    </location>
    <ligand>
        <name>NAD(+)</name>
        <dbReference type="ChEBI" id="CHEBI:57540"/>
    </ligand>
</feature>
<feature type="binding site" evidence="4 5 6 7 13 14 15 17 18 19 20 21 22 23 24 25 26 27 28 29 30 31 32 33 34 35 36 37 38 39 40 41 42">
    <location>
        <position position="40"/>
    </location>
    <ligand>
        <name>NAD(+)</name>
        <dbReference type="ChEBI" id="CHEBI:57540"/>
    </ligand>
</feature>
<feature type="binding site" evidence="4 24 25 37 41 42">
    <location>
        <position position="41"/>
    </location>
    <ligand>
        <name>NAD(+)</name>
        <dbReference type="ChEBI" id="CHEBI:57540"/>
    </ligand>
</feature>
<feature type="binding site" evidence="4 5 6 7 13 14 15 17 18 19 20 21 22 23 24 25 26 27 28 29 30 31 32 33 34 35 36 37 38 39 40 41 42">
    <location>
        <position position="62"/>
    </location>
    <ligand>
        <name>NAD(+)</name>
        <dbReference type="ChEBI" id="CHEBI:57540"/>
    </ligand>
</feature>
<feature type="binding site" evidence="4 5 6 7 13 14 15 17 18 19 20 21 22 23 24 25 26 27 28 29 30 31 32 33 34 35 36 37 38 39 40 41 42">
    <location>
        <position position="63"/>
    </location>
    <ligand>
        <name>NAD(+)</name>
        <dbReference type="ChEBI" id="CHEBI:57540"/>
    </ligand>
</feature>
<feature type="binding site" evidence="13 14 15 17 18 19 20 21 22 23 24 25 26 27 28 29 30 31 32 33 34 35 36 37 38 39 40 41 42">
    <location>
        <position position="89"/>
    </location>
    <ligand>
        <name>NAD(+)</name>
        <dbReference type="ChEBI" id="CHEBI:57540"/>
    </ligand>
</feature>
<feature type="binding site" evidence="4 5 6 7 13 14 15 17 19 20 21 22 23 24 27 30 33 35 36 37 38 39 41 42">
    <location>
        <position position="154"/>
    </location>
    <ligand>
        <name>NAD(+)</name>
        <dbReference type="ChEBI" id="CHEBI:57540"/>
    </ligand>
</feature>
<feature type="binding site" evidence="4 5 6 7 13 14 15 17 18 19 20 21 22 23 24 25 26 27 28 29 30 31 32 33 34 36 37 38 39 40 41 42">
    <location>
        <position position="158"/>
    </location>
    <ligand>
        <name>NAD(+)</name>
        <dbReference type="ChEBI" id="CHEBI:57540"/>
    </ligand>
</feature>
<feature type="binding site" evidence="4 5 6 7 13 14 15 17 18 19 20 21 22 23 24 25 26 27 28 29 30 31 32 33 34 35 36 37 38 39 40 41 42">
    <location>
        <position position="187"/>
    </location>
    <ligand>
        <name>NAD(+)</name>
        <dbReference type="ChEBI" id="CHEBI:57540"/>
    </ligand>
</feature>
<feature type="binding site" evidence="4 5 6 7 13 14 15 17 18 19 20 21 22 23 24 25 26 27 28 29 30 31 32 33 34 35 36 37 38 39 40 41 42">
    <location>
        <position position="189"/>
    </location>
    <ligand>
        <name>NAD(+)</name>
        <dbReference type="ChEBI" id="CHEBI:57540"/>
    </ligand>
</feature>
<feature type="binding site" evidence="4 5 6 7 13 14 15 17 18 19 20 21 22 23 24 25 26 27 28 29 30 31 32 33 34 35 36 37 38 39 40 41 42">
    <location>
        <position position="191"/>
    </location>
    <ligand>
        <name>NAD(+)</name>
        <dbReference type="ChEBI" id="CHEBI:57540"/>
    </ligand>
</feature>
<feature type="sequence variant" id="VAR_052307" description="In dbSNP:rs8110220.">
    <original>N</original>
    <variation>D</variation>
    <location>
        <position position="31"/>
    </location>
</feature>
<feature type="sequence variant" id="VAR_052308" description="In dbSNP:rs35299026.">
    <original>R</original>
    <variation>W</variation>
    <location>
        <position position="130"/>
    </location>
</feature>
<feature type="mutagenesis site" description="Increases kcat for androst-5-en-3beta,17beta-diol and 17beta-estradioll." evidence="7">
    <original>H</original>
    <variation>A</variation>
    <location>
        <position position="93"/>
    </location>
</feature>
<feature type="mutagenesis site" description="The catalytic efficiency (kcat/Km) is 30-fold increase for 17beta-estradiol and 11-fold for androst-5-en-3beta,17beta-diol." evidence="7">
    <original>Q</original>
    <variation>A</variation>
    <location>
        <position position="148"/>
    </location>
</feature>
<feature type="mutagenesis site" description="Lacks of activity of testosterone 17-beta-dehydrogenase (NADP+) and estradiol 17-beta-dehydrogenase [NAD(P)+] activities." evidence="7">
    <original>K</original>
    <variation>A</variation>
    <location>
        <position position="158"/>
    </location>
</feature>
<feature type="mutagenesis site" description="Lacks of activity of testosterone 17-beta-dehydrogenase (NADP+) and estradiol 17-beta-dehydrogenase [NAD(P)+] activities." evidence="7">
    <original>Y</original>
    <variation>A</variation>
    <location>
        <position position="253"/>
    </location>
</feature>
<feature type="mutagenesis site" description="Does not affect kcat for androst-5-en-3beta,17beta-diol and 17beta-estradiol." evidence="7">
    <original>C</original>
    <variation>A</variation>
    <location>
        <position position="255"/>
    </location>
</feature>
<feature type="sequence conflict" description="In Ref. 1; AAF06940." evidence="9" ref="1">
    <original>T</original>
    <variation>S</variation>
    <location>
        <position position="205"/>
    </location>
</feature>
<feature type="turn" evidence="43">
    <location>
        <begin position="6"/>
        <end position="9"/>
    </location>
</feature>
<feature type="strand" evidence="43">
    <location>
        <begin position="11"/>
        <end position="15"/>
    </location>
</feature>
<feature type="turn" evidence="43">
    <location>
        <begin position="16"/>
        <end position="18"/>
    </location>
</feature>
<feature type="helix" evidence="43">
    <location>
        <begin position="20"/>
        <end position="31"/>
    </location>
</feature>
<feature type="strand" evidence="43">
    <location>
        <begin position="35"/>
        <end position="41"/>
    </location>
</feature>
<feature type="helix" evidence="43">
    <location>
        <begin position="43"/>
        <end position="52"/>
    </location>
</feature>
<feature type="strand" evidence="43">
    <location>
        <begin position="56"/>
        <end position="60"/>
    </location>
</feature>
<feature type="helix" evidence="43">
    <location>
        <begin position="66"/>
        <end position="80"/>
    </location>
</feature>
<feature type="strand" evidence="43">
    <location>
        <begin position="85"/>
        <end position="88"/>
    </location>
</feature>
<feature type="helix" evidence="43">
    <location>
        <begin position="99"/>
        <end position="101"/>
    </location>
</feature>
<feature type="helix" evidence="43">
    <location>
        <begin position="104"/>
        <end position="114"/>
    </location>
</feature>
<feature type="helix" evidence="43">
    <location>
        <begin position="116"/>
        <end position="132"/>
    </location>
</feature>
<feature type="strand" evidence="43">
    <location>
        <begin position="135"/>
        <end position="139"/>
    </location>
</feature>
<feature type="helix" evidence="43">
    <location>
        <begin position="142"/>
        <end position="146"/>
    </location>
</feature>
<feature type="helix" evidence="43">
    <location>
        <begin position="152"/>
        <end position="172"/>
    </location>
</feature>
<feature type="helix" evidence="43">
    <location>
        <begin position="173"/>
        <end position="175"/>
    </location>
</feature>
<feature type="strand" evidence="43">
    <location>
        <begin position="178"/>
        <end position="184"/>
    </location>
</feature>
<feature type="helix" evidence="43">
    <location>
        <begin position="190"/>
        <end position="197"/>
    </location>
</feature>
<feature type="strand" evidence="43">
    <location>
        <begin position="199"/>
        <end position="201"/>
    </location>
</feature>
<feature type="helix" evidence="43">
    <location>
        <begin position="202"/>
        <end position="211"/>
    </location>
</feature>
<feature type="helix" evidence="43">
    <location>
        <begin position="221"/>
        <end position="233"/>
    </location>
</feature>
<feature type="strand" evidence="43">
    <location>
        <begin position="242"/>
        <end position="246"/>
    </location>
</feature>
<feature type="turn" evidence="43">
    <location>
        <begin position="247"/>
        <end position="250"/>
    </location>
</feature>
<reference key="1">
    <citation type="journal article" date="2000" name="Methods Enzymol.">
        <title>Short-chain dehydrogenases/reductases in retina.</title>
        <authorList>
            <person name="Haeseleer F."/>
            <person name="Palczewski K."/>
        </authorList>
    </citation>
    <scope>NUCLEOTIDE SEQUENCE [MRNA]</scope>
    <scope>LACK OF STEROID OR RETINOL DEHYDROGENASE ACTIVITY</scope>
    <scope>TISSUE SPECIFICITY</scope>
    <source>
        <tissue>Retina</tissue>
    </source>
</reference>
<reference key="2">
    <citation type="journal article" date="2003" name="Genome Res.">
        <title>The secreted protein discovery initiative (SPDI), a large-scale effort to identify novel human secreted and transmembrane proteins: a bioinformatics assessment.</title>
        <authorList>
            <person name="Clark H.F."/>
            <person name="Gurney A.L."/>
            <person name="Abaya E."/>
            <person name="Baker K."/>
            <person name="Baldwin D.T."/>
            <person name="Brush J."/>
            <person name="Chen J."/>
            <person name="Chow B."/>
            <person name="Chui C."/>
            <person name="Crowley C."/>
            <person name="Currell B."/>
            <person name="Deuel B."/>
            <person name="Dowd P."/>
            <person name="Eaton D."/>
            <person name="Foster J.S."/>
            <person name="Grimaldi C."/>
            <person name="Gu Q."/>
            <person name="Hass P.E."/>
            <person name="Heldens S."/>
            <person name="Huang A."/>
            <person name="Kim H.S."/>
            <person name="Klimowski L."/>
            <person name="Jin Y."/>
            <person name="Johnson S."/>
            <person name="Lee J."/>
            <person name="Lewis L."/>
            <person name="Liao D."/>
            <person name="Mark M.R."/>
            <person name="Robbie E."/>
            <person name="Sanchez C."/>
            <person name="Schoenfeld J."/>
            <person name="Seshagiri S."/>
            <person name="Simmons L."/>
            <person name="Singh J."/>
            <person name="Smith V."/>
            <person name="Stinson J."/>
            <person name="Vagts A."/>
            <person name="Vandlen R.L."/>
            <person name="Watanabe C."/>
            <person name="Wieand D."/>
            <person name="Woods K."/>
            <person name="Xie M.-H."/>
            <person name="Yansura D.G."/>
            <person name="Yi S."/>
            <person name="Yu G."/>
            <person name="Yuan J."/>
            <person name="Zhang M."/>
            <person name="Zhang Z."/>
            <person name="Goddard A.D."/>
            <person name="Wood W.I."/>
            <person name="Godowski P.J."/>
            <person name="Gray A.M."/>
        </authorList>
    </citation>
    <scope>NUCLEOTIDE SEQUENCE [LARGE SCALE MRNA]</scope>
</reference>
<reference key="3">
    <citation type="journal article" date="2004" name="Genome Res.">
        <title>The status, quality, and expansion of the NIH full-length cDNA project: the Mammalian Gene Collection (MGC).</title>
        <authorList>
            <consortium name="The MGC Project Team"/>
        </authorList>
    </citation>
    <scope>NUCLEOTIDE SEQUENCE [LARGE SCALE MRNA]</scope>
    <source>
        <tissue>Skin</tissue>
    </source>
</reference>
<reference evidence="12" key="4">
    <citation type="journal article" date="2007" name="Biochem. J.">
        <title>Structural and biochemical characterization of human orphan DHRS10 reveals a novel cytosolic enzyme with steroid dehydrogenase activity.</title>
        <authorList>
            <person name="Lukacik P."/>
            <person name="Keller B."/>
            <person name="Bunkoczi G."/>
            <person name="Kavanagh K."/>
            <person name="Hwa Lee W."/>
            <person name="Adamski J."/>
            <person name="Oppermann U."/>
        </authorList>
    </citation>
    <scope>X-RAY CRYSTALLOGRAPHY (2.4 ANGSTROMS)</scope>
    <scope>PRELIMINARY FUNCTION</scope>
    <scope>SUBCELLULAR LOCATION</scope>
    <scope>TISSUE SPECIFICITY</scope>
    <scope>SUBUNIT</scope>
    <scope>BIOPHYSICOCHEMICAL PROPERTIES</scope>
</reference>
<reference evidence="13 19 20 21" key="5">
    <citation type="journal article" date="2016" name="J. Med. Chem.">
        <title>First Structure-Activity Relationship of 17beta-Hydroxysteroid Dehydrogenase Type 14 Nonsteroidal Inhibitors and Crystal Structures in Complex with the Enzyme.</title>
        <authorList>
            <person name="Braun F."/>
            <person name="Bertoletti N."/>
            <person name="Moller G."/>
            <person name="Adamski J."/>
            <person name="Steinmetzer T."/>
            <person name="Salah M."/>
            <person name="Abdelsamie A.S."/>
            <person name="van Koppen C.J."/>
            <person name="Heine A."/>
            <person name="Klebe G."/>
            <person name="Marchais-Oberwinkler S."/>
        </authorList>
    </citation>
    <scope>X-RAY CRYSTALLOGRAPHY (1.52 ANGSTROMS) IN COMPLEX WITH NAD(+)</scope>
</reference>
<reference evidence="14 15 16 17 18" key="6">
    <citation type="journal article" date="2016" name="J. Med. Chem.">
        <title>New Insights into Human 17beta-Hydroxysteroid Dehydrogenase Type 14: First Crystal Structures in Complex with a Steroidal Ligand and with a Potent Nonsteroidal Inhibitor.</title>
        <authorList>
            <person name="Bertoletti N."/>
            <person name="Braun F."/>
            <person name="Lepage M."/>
            <person name="Moller G."/>
            <person name="Adamski J."/>
            <person name="Heine A."/>
            <person name="Klebe G."/>
            <person name="Marchais-Oberwinkler S."/>
        </authorList>
    </citation>
    <scope>X-RAY CRYSTALLOGRAPHY (1.52 ANGSTROMS) IN COMPLEX WITH NAD(+)</scope>
    <scope>SUBUNIT</scope>
</reference>
<reference evidence="22 23 24 25 26 27 28" key="7">
    <citation type="journal article" date="2018" name="Eur. J. Med. Chem.">
        <title>Structure-based design and profiling of novel 17beta-HSD14 inhibitors.</title>
        <authorList>
            <person name="Braun F."/>
            <person name="Bertoletti N."/>
            <person name="Moller G."/>
            <person name="Adamski J."/>
            <person name="Frotscher M."/>
            <person name="Guragossian N."/>
            <person name="Madeira Girio P.A."/>
            <person name="Le Borgne M."/>
            <person name="Ettouati L."/>
            <person name="Falson P."/>
            <person name="Muller S."/>
            <person name="Vollmer G."/>
            <person name="Heine A."/>
            <person name="Klebe G."/>
            <person name="Marchais-Oberwinkler S."/>
        </authorList>
    </citation>
    <scope>X-RAY CRYSTALLOGRAPHY (1.35 ANGSTROMS) IN COMPLEX WITH NAD(+)</scope>
</reference>
<reference evidence="30 31 36 37" key="8">
    <citation type="journal article" date="2019" name="J. Steroid Biochem. Mol. Biol.">
        <title>Mutational and structural studies uncover crucial amino acids determining activity and stability of 17beta-HSD14.</title>
        <authorList>
            <person name="Badran M.J."/>
            <person name="Bertoletti N."/>
            <person name="Keils A."/>
            <person name="Heine A."/>
            <person name="Klebe G."/>
            <person name="Marchais-Oberwinkler S."/>
        </authorList>
    </citation>
    <scope>X-RAY CRYSTALLOGRAPHY (1.44 ANGSTROMS) IN COMPLEX WITH NAD(+)</scope>
    <scope>FUNCTION</scope>
    <scope>CATALYTIC ACTIVITY</scope>
    <scope>BIOPHYSICOCHEMICAL PROPERTIES</scope>
    <scope>MUTAGENESIS OF HIS-93; GLN-148; LYS-158; TYR-253 AND CYS-255</scope>
</reference>
<reference key="9">
    <citation type="journal article" date="2024" name="J. Biol. Chem.">
        <title>Hydroxysteroid 17-beta dehydrogenase 14 (HSD17B14) is an L-fucose dehydrogenase, the initial enzyme of the L-fucose degradation pathway.</title>
        <authorList>
            <person name="Witecka A."/>
            <person name="Kazak V."/>
            <person name="Kwiatkowski S."/>
            <person name="Kiersztan A."/>
            <person name="Jagielski A.K."/>
            <person name="Kozminski W."/>
            <person name="Augustyniak R."/>
            <person name="Drozak J."/>
        </authorList>
    </citation>
    <scope>CATALYTIC ACTIVITY</scope>
    <scope>FUNCTION</scope>
    <scope>BIOPHYSICOCHEMICAL PROPERTIES</scope>
</reference>
<dbReference type="EC" id="1.1.1.122" evidence="8"/>
<dbReference type="EMBL" id="AF126781">
    <property type="protein sequence ID" value="AAF06940.1"/>
    <property type="molecule type" value="mRNA"/>
</dbReference>
<dbReference type="EMBL" id="AY358430">
    <property type="protein sequence ID" value="AAQ88796.1"/>
    <property type="molecule type" value="mRNA"/>
</dbReference>
<dbReference type="EMBL" id="BC006294">
    <property type="protein sequence ID" value="AAH06294.1"/>
    <property type="molecule type" value="mRNA"/>
</dbReference>
<dbReference type="EMBL" id="BC006283">
    <property type="protein sequence ID" value="AAH06283.1"/>
    <property type="molecule type" value="mRNA"/>
</dbReference>
<dbReference type="CCDS" id="CCDS12736.1"/>
<dbReference type="RefSeq" id="NP_057330.2">
    <property type="nucleotide sequence ID" value="NM_016246.3"/>
</dbReference>
<dbReference type="PDB" id="1YDE">
    <property type="method" value="X-ray"/>
    <property type="resolution" value="2.40 A"/>
    <property type="chains" value="A/B/C/D/E/F/G/H/I/J/K/L/M/N/O/P=1-270"/>
</dbReference>
<dbReference type="PDB" id="5EN4">
    <property type="method" value="X-ray"/>
    <property type="resolution" value="1.52 A"/>
    <property type="chains" value="A=1-270"/>
</dbReference>
<dbReference type="PDB" id="5HS6">
    <property type="method" value="X-ray"/>
    <property type="resolution" value="2.02 A"/>
    <property type="chains" value="A=1-270"/>
</dbReference>
<dbReference type="PDB" id="5ICM">
    <property type="method" value="X-ray"/>
    <property type="resolution" value="1.68 A"/>
    <property type="chains" value="A=1-270"/>
</dbReference>
<dbReference type="PDB" id="5ICS">
    <property type="method" value="X-ray"/>
    <property type="resolution" value="1.52 A"/>
    <property type="chains" value="A/C/D/F=1-270"/>
</dbReference>
<dbReference type="PDB" id="5JS6">
    <property type="method" value="X-ray"/>
    <property type="resolution" value="2.00 A"/>
    <property type="chains" value="A=1-270"/>
</dbReference>
<dbReference type="PDB" id="5JSF">
    <property type="method" value="X-ray"/>
    <property type="resolution" value="1.84 A"/>
    <property type="chains" value="A=1-270"/>
</dbReference>
<dbReference type="PDB" id="5L7T">
    <property type="method" value="X-ray"/>
    <property type="resolution" value="1.98 A"/>
    <property type="chains" value="A=1-270"/>
</dbReference>
<dbReference type="PDB" id="5L7W">
    <property type="method" value="X-ray"/>
    <property type="resolution" value="1.76 A"/>
    <property type="chains" value="A=1-270"/>
</dbReference>
<dbReference type="PDB" id="5L7Y">
    <property type="method" value="X-ray"/>
    <property type="resolution" value="1.91 A"/>
    <property type="chains" value="A=1-270"/>
</dbReference>
<dbReference type="PDB" id="5O42">
    <property type="method" value="X-ray"/>
    <property type="resolution" value="1.76 A"/>
    <property type="chains" value="A=1-270"/>
</dbReference>
<dbReference type="PDB" id="5O43">
    <property type="method" value="X-ray"/>
    <property type="resolution" value="1.50 A"/>
    <property type="chains" value="A=1-270"/>
</dbReference>
<dbReference type="PDB" id="5O6O">
    <property type="method" value="X-ray"/>
    <property type="resolution" value="1.45 A"/>
    <property type="chains" value="A=1-270"/>
</dbReference>
<dbReference type="PDB" id="5O6X">
    <property type="method" value="X-ray"/>
    <property type="resolution" value="1.35 A"/>
    <property type="chains" value="A=1-270"/>
</dbReference>
<dbReference type="PDB" id="5O6Z">
    <property type="method" value="X-ray"/>
    <property type="resolution" value="1.57 A"/>
    <property type="chains" value="A=1-270"/>
</dbReference>
<dbReference type="PDB" id="5O72">
    <property type="method" value="X-ray"/>
    <property type="resolution" value="1.91 A"/>
    <property type="chains" value="A=1-270"/>
</dbReference>
<dbReference type="PDB" id="5O7C">
    <property type="method" value="X-ray"/>
    <property type="resolution" value="1.60 A"/>
    <property type="chains" value="A=1-270"/>
</dbReference>
<dbReference type="PDB" id="6EMM">
    <property type="method" value="X-ray"/>
    <property type="resolution" value="2.47 A"/>
    <property type="chains" value="A=1-270"/>
</dbReference>
<dbReference type="PDB" id="6FFB">
    <property type="method" value="X-ray"/>
    <property type="resolution" value="1.65 A"/>
    <property type="chains" value="A=1-270"/>
</dbReference>
<dbReference type="PDB" id="6G4L">
    <property type="method" value="X-ray"/>
    <property type="resolution" value="1.44 A"/>
    <property type="chains" value="A=1-270"/>
</dbReference>
<dbReference type="PDB" id="6GBT">
    <property type="method" value="X-ray"/>
    <property type="resolution" value="2.10 A"/>
    <property type="chains" value="A=1-270"/>
</dbReference>
<dbReference type="PDB" id="6GTB">
    <property type="method" value="X-ray"/>
    <property type="resolution" value="1.62 A"/>
    <property type="chains" value="A=1-270"/>
</dbReference>
<dbReference type="PDB" id="6GTU">
    <property type="method" value="X-ray"/>
    <property type="resolution" value="2.25 A"/>
    <property type="chains" value="A=1-270"/>
</dbReference>
<dbReference type="PDB" id="6H0M">
    <property type="method" value="X-ray"/>
    <property type="resolution" value="1.25 A"/>
    <property type="chains" value="A=1-270"/>
</dbReference>
<dbReference type="PDB" id="6HNO">
    <property type="method" value="X-ray"/>
    <property type="resolution" value="1.68 A"/>
    <property type="chains" value="A=1-270"/>
</dbReference>
<dbReference type="PDB" id="6QCK">
    <property type="method" value="X-ray"/>
    <property type="resolution" value="1.68 A"/>
    <property type="chains" value="A=1-270"/>
</dbReference>
<dbReference type="PDB" id="6ZDE">
    <property type="method" value="X-ray"/>
    <property type="resolution" value="1.87 A"/>
    <property type="chains" value="A=1-270"/>
</dbReference>
<dbReference type="PDB" id="6ZDI">
    <property type="method" value="X-ray"/>
    <property type="resolution" value="2.13 A"/>
    <property type="chains" value="A=1-270"/>
</dbReference>
<dbReference type="PDB" id="6ZR6">
    <property type="method" value="X-ray"/>
    <property type="resolution" value="1.50 A"/>
    <property type="chains" value="A=1-270"/>
</dbReference>
<dbReference type="PDB" id="6ZRA">
    <property type="method" value="X-ray"/>
    <property type="resolution" value="1.73 A"/>
    <property type="chains" value="A=1-270"/>
</dbReference>
<dbReference type="PDB" id="6ZT2">
    <property type="method" value="X-ray"/>
    <property type="resolution" value="1.95 A"/>
    <property type="chains" value="A=1-270"/>
</dbReference>
<dbReference type="PDBsum" id="1YDE"/>
<dbReference type="PDBsum" id="5EN4"/>
<dbReference type="PDBsum" id="5HS6"/>
<dbReference type="PDBsum" id="5ICM"/>
<dbReference type="PDBsum" id="5ICS"/>
<dbReference type="PDBsum" id="5JS6"/>
<dbReference type="PDBsum" id="5JSF"/>
<dbReference type="PDBsum" id="5L7T"/>
<dbReference type="PDBsum" id="5L7W"/>
<dbReference type="PDBsum" id="5L7Y"/>
<dbReference type="PDBsum" id="5O42"/>
<dbReference type="PDBsum" id="5O43"/>
<dbReference type="PDBsum" id="5O6O"/>
<dbReference type="PDBsum" id="5O6X"/>
<dbReference type="PDBsum" id="5O6Z"/>
<dbReference type="PDBsum" id="5O72"/>
<dbReference type="PDBsum" id="5O7C"/>
<dbReference type="PDBsum" id="6EMM"/>
<dbReference type="PDBsum" id="6FFB"/>
<dbReference type="PDBsum" id="6G4L"/>
<dbReference type="PDBsum" id="6GBT"/>
<dbReference type="PDBsum" id="6GTB"/>
<dbReference type="PDBsum" id="6GTU"/>
<dbReference type="PDBsum" id="6H0M"/>
<dbReference type="PDBsum" id="6HNO"/>
<dbReference type="PDBsum" id="6QCK"/>
<dbReference type="PDBsum" id="6ZDE"/>
<dbReference type="PDBsum" id="6ZDI"/>
<dbReference type="PDBsum" id="6ZR6"/>
<dbReference type="PDBsum" id="6ZRA"/>
<dbReference type="PDBsum" id="6ZT2"/>
<dbReference type="SMR" id="Q9BPX1"/>
<dbReference type="BioGRID" id="119350">
    <property type="interactions" value="51"/>
</dbReference>
<dbReference type="FunCoup" id="Q9BPX1">
    <property type="interactions" value="321"/>
</dbReference>
<dbReference type="IntAct" id="Q9BPX1">
    <property type="interactions" value="45"/>
</dbReference>
<dbReference type="MINT" id="Q9BPX1"/>
<dbReference type="STRING" id="9606.ENSP00000263278"/>
<dbReference type="BindingDB" id="Q9BPX1"/>
<dbReference type="ChEMBL" id="CHEMBL3712868"/>
<dbReference type="SwissLipids" id="SLP:000001216"/>
<dbReference type="iPTMnet" id="Q9BPX1"/>
<dbReference type="PhosphoSitePlus" id="Q9BPX1"/>
<dbReference type="BioMuta" id="HSD17B14"/>
<dbReference type="DMDM" id="74752228"/>
<dbReference type="jPOST" id="Q9BPX1"/>
<dbReference type="MassIVE" id="Q9BPX1"/>
<dbReference type="PaxDb" id="9606-ENSP00000263278"/>
<dbReference type="PeptideAtlas" id="Q9BPX1"/>
<dbReference type="ProteomicsDB" id="78585"/>
<dbReference type="Antibodypedia" id="18422">
    <property type="antibodies" value="139 antibodies from 28 providers"/>
</dbReference>
<dbReference type="DNASU" id="51171"/>
<dbReference type="Ensembl" id="ENST00000263278.9">
    <property type="protein sequence ID" value="ENSP00000263278.3"/>
    <property type="gene ID" value="ENSG00000087076.9"/>
</dbReference>
<dbReference type="GeneID" id="51171"/>
<dbReference type="KEGG" id="hsa:51171"/>
<dbReference type="MANE-Select" id="ENST00000263278.9">
    <property type="protein sequence ID" value="ENSP00000263278.3"/>
    <property type="RefSeq nucleotide sequence ID" value="NM_016246.3"/>
    <property type="RefSeq protein sequence ID" value="NP_057330.2"/>
</dbReference>
<dbReference type="UCSC" id="uc002pkv.2">
    <property type="organism name" value="human"/>
</dbReference>
<dbReference type="AGR" id="HGNC:23238"/>
<dbReference type="CTD" id="51171"/>
<dbReference type="DisGeNET" id="51171"/>
<dbReference type="GeneCards" id="HSD17B14"/>
<dbReference type="HGNC" id="HGNC:23238">
    <property type="gene designation" value="HSD17B14"/>
</dbReference>
<dbReference type="HPA" id="ENSG00000087076">
    <property type="expression patterns" value="Tissue enhanced (choroid)"/>
</dbReference>
<dbReference type="MIM" id="612832">
    <property type="type" value="gene"/>
</dbReference>
<dbReference type="neXtProt" id="NX_Q9BPX1"/>
<dbReference type="OpenTargets" id="ENSG00000087076"/>
<dbReference type="PharmGKB" id="PA162391674"/>
<dbReference type="VEuPathDB" id="HostDB:ENSG00000087076"/>
<dbReference type="eggNOG" id="KOG0725">
    <property type="taxonomic scope" value="Eukaryota"/>
</dbReference>
<dbReference type="GeneTree" id="ENSGT00940000161346"/>
<dbReference type="HOGENOM" id="CLU_010194_1_0_1"/>
<dbReference type="InParanoid" id="Q9BPX1"/>
<dbReference type="OMA" id="AAYQMSQ"/>
<dbReference type="OrthoDB" id="47007at2759"/>
<dbReference type="PAN-GO" id="Q9BPX1">
    <property type="GO annotations" value="3 GO annotations based on evolutionary models"/>
</dbReference>
<dbReference type="PhylomeDB" id="Q9BPX1"/>
<dbReference type="TreeFam" id="TF354307"/>
<dbReference type="BRENDA" id="1.1.1.62">
    <property type="organism ID" value="2681"/>
</dbReference>
<dbReference type="PathwayCommons" id="Q9BPX1"/>
<dbReference type="Reactome" id="R-HSA-193144">
    <property type="pathway name" value="Estrogen biosynthesis"/>
</dbReference>
<dbReference type="SignaLink" id="Q9BPX1"/>
<dbReference type="UniPathway" id="UPA00563"/>
<dbReference type="BioGRID-ORCS" id="51171">
    <property type="hits" value="6 hits in 1154 CRISPR screens"/>
</dbReference>
<dbReference type="ChiTaRS" id="HSD17B14">
    <property type="organism name" value="human"/>
</dbReference>
<dbReference type="EvolutionaryTrace" id="Q9BPX1"/>
<dbReference type="GenomeRNAi" id="51171"/>
<dbReference type="Pharos" id="Q9BPX1">
    <property type="development level" value="Tchem"/>
</dbReference>
<dbReference type="PRO" id="PR:Q9BPX1"/>
<dbReference type="Proteomes" id="UP000005640">
    <property type="component" value="Chromosome 19"/>
</dbReference>
<dbReference type="RNAct" id="Q9BPX1">
    <property type="molecule type" value="protein"/>
</dbReference>
<dbReference type="Bgee" id="ENSG00000087076">
    <property type="expression patterns" value="Expressed in mucosa of stomach and 157 other cell types or tissues"/>
</dbReference>
<dbReference type="ExpressionAtlas" id="Q9BPX1">
    <property type="expression patterns" value="baseline and differential"/>
</dbReference>
<dbReference type="GO" id="GO:0005829">
    <property type="term" value="C:cytosol"/>
    <property type="evidence" value="ECO:0000314"/>
    <property type="project" value="HGNC-UCL"/>
</dbReference>
<dbReference type="GO" id="GO:0047834">
    <property type="term" value="F:D-threo-aldose 1-dehydrogenase activity"/>
    <property type="evidence" value="ECO:0000314"/>
    <property type="project" value="UniProtKB"/>
</dbReference>
<dbReference type="GO" id="GO:0004303">
    <property type="term" value="F:estradiol 17-beta-dehydrogenase [NAD(P)+] activity"/>
    <property type="evidence" value="ECO:0000318"/>
    <property type="project" value="GO_Central"/>
</dbReference>
<dbReference type="GO" id="GO:0042802">
    <property type="term" value="F:identical protein binding"/>
    <property type="evidence" value="ECO:0000353"/>
    <property type="project" value="IntAct"/>
</dbReference>
<dbReference type="GO" id="GO:0042355">
    <property type="term" value="P:L-fucose catabolic process"/>
    <property type="evidence" value="ECO:0000314"/>
    <property type="project" value="HGNC-UCL"/>
</dbReference>
<dbReference type="GO" id="GO:0006706">
    <property type="term" value="P:steroid catabolic process"/>
    <property type="evidence" value="ECO:0000318"/>
    <property type="project" value="GO_Central"/>
</dbReference>
<dbReference type="CDD" id="cd08933">
    <property type="entry name" value="RDH_SDR_c"/>
    <property type="match status" value="1"/>
</dbReference>
<dbReference type="FunFam" id="3.40.50.720:FF:000600">
    <property type="entry name" value="17-beta-hydroxysteroid dehydrogenase 14"/>
    <property type="match status" value="1"/>
</dbReference>
<dbReference type="Gene3D" id="3.40.50.720">
    <property type="entry name" value="NAD(P)-binding Rossmann-like Domain"/>
    <property type="match status" value="1"/>
</dbReference>
<dbReference type="InterPro" id="IPR036291">
    <property type="entry name" value="NAD(P)-bd_dom_sf"/>
</dbReference>
<dbReference type="InterPro" id="IPR020904">
    <property type="entry name" value="Sc_DH/Rdtase_CS"/>
</dbReference>
<dbReference type="InterPro" id="IPR002347">
    <property type="entry name" value="SDR_fam"/>
</dbReference>
<dbReference type="NCBIfam" id="NF005559">
    <property type="entry name" value="PRK07231.1"/>
    <property type="match status" value="1"/>
</dbReference>
<dbReference type="PANTHER" id="PTHR43658:SF8">
    <property type="entry name" value="17-BETA-HYDROXYSTEROID DEHYDROGENASE 14-RELATED"/>
    <property type="match status" value="1"/>
</dbReference>
<dbReference type="PANTHER" id="PTHR43658">
    <property type="entry name" value="SHORT-CHAIN DEHYDROGENASE/REDUCTASE"/>
    <property type="match status" value="1"/>
</dbReference>
<dbReference type="Pfam" id="PF13561">
    <property type="entry name" value="adh_short_C2"/>
    <property type="match status" value="1"/>
</dbReference>
<dbReference type="PRINTS" id="PR00081">
    <property type="entry name" value="GDHRDH"/>
</dbReference>
<dbReference type="PRINTS" id="PR00080">
    <property type="entry name" value="SDRFAMILY"/>
</dbReference>
<dbReference type="SUPFAM" id="SSF51735">
    <property type="entry name" value="NAD(P)-binding Rossmann-fold domains"/>
    <property type="match status" value="1"/>
</dbReference>
<dbReference type="PROSITE" id="PS00061">
    <property type="entry name" value="ADH_SHORT"/>
    <property type="match status" value="1"/>
</dbReference>
<proteinExistence type="evidence at protein level"/>
<gene>
    <name evidence="11" type="primary">HSD17B14</name>
    <name type="synonym">DHRS10</name>
    <name type="synonym">SDR3</name>
    <name type="synonym">SDR47C1</name>
    <name type="ORF">UNQ502/PRO474</name>
</gene>
<evidence type="ECO:0000255" key="1">
    <source>
        <dbReference type="PROSITE-ProRule" id="PRU10001"/>
    </source>
</evidence>
<evidence type="ECO:0000269" key="2">
    <source>
    </source>
</evidence>
<evidence type="ECO:0000269" key="3">
    <source>
    </source>
</evidence>
<evidence type="ECO:0000269" key="4">
    <source>
    </source>
</evidence>
<evidence type="ECO:0000269" key="5">
    <source>
    </source>
</evidence>
<evidence type="ECO:0000269" key="6">
    <source>
    </source>
</evidence>
<evidence type="ECO:0000269" key="7">
    <source>
    </source>
</evidence>
<evidence type="ECO:0000269" key="8">
    <source>
    </source>
</evidence>
<evidence type="ECO:0000305" key="9"/>
<evidence type="ECO:0000305" key="10">
    <source>
    </source>
</evidence>
<evidence type="ECO:0000312" key="11">
    <source>
        <dbReference type="HGNC" id="HGNC:23238"/>
    </source>
</evidence>
<evidence type="ECO:0007744" key="12">
    <source>
        <dbReference type="PDB" id="1YDE"/>
    </source>
</evidence>
<evidence type="ECO:0007744" key="13">
    <source>
        <dbReference type="PDB" id="5EN4"/>
    </source>
</evidence>
<evidence type="ECO:0007744" key="14">
    <source>
        <dbReference type="PDB" id="5HS6"/>
    </source>
</evidence>
<evidence type="ECO:0007744" key="15">
    <source>
        <dbReference type="PDB" id="5ICM"/>
    </source>
</evidence>
<evidence type="ECO:0007744" key="16">
    <source>
        <dbReference type="PDB" id="5ICS"/>
    </source>
</evidence>
<evidence type="ECO:0007744" key="17">
    <source>
        <dbReference type="PDB" id="5JS6"/>
    </source>
</evidence>
<evidence type="ECO:0007744" key="18">
    <source>
        <dbReference type="PDB" id="5JSF"/>
    </source>
</evidence>
<evidence type="ECO:0007744" key="19">
    <source>
        <dbReference type="PDB" id="5L7T"/>
    </source>
</evidence>
<evidence type="ECO:0007744" key="20">
    <source>
        <dbReference type="PDB" id="5L7W"/>
    </source>
</evidence>
<evidence type="ECO:0007744" key="21">
    <source>
        <dbReference type="PDB" id="5L7Y"/>
    </source>
</evidence>
<evidence type="ECO:0007744" key="22">
    <source>
        <dbReference type="PDB" id="5O42"/>
    </source>
</evidence>
<evidence type="ECO:0007744" key="23">
    <source>
        <dbReference type="PDB" id="5O43"/>
    </source>
</evidence>
<evidence type="ECO:0007744" key="24">
    <source>
        <dbReference type="PDB" id="5O6O"/>
    </source>
</evidence>
<evidence type="ECO:0007744" key="25">
    <source>
        <dbReference type="PDB" id="5O6X"/>
    </source>
</evidence>
<evidence type="ECO:0007744" key="26">
    <source>
        <dbReference type="PDB" id="5O6Z"/>
    </source>
</evidence>
<evidence type="ECO:0007744" key="27">
    <source>
        <dbReference type="PDB" id="5O72"/>
    </source>
</evidence>
<evidence type="ECO:0007744" key="28">
    <source>
        <dbReference type="PDB" id="5O7C"/>
    </source>
</evidence>
<evidence type="ECO:0007744" key="29">
    <source>
        <dbReference type="PDB" id="6EMM"/>
    </source>
</evidence>
<evidence type="ECO:0007744" key="30">
    <source>
        <dbReference type="PDB" id="6FFB"/>
    </source>
</evidence>
<evidence type="ECO:0007744" key="31">
    <source>
        <dbReference type="PDB" id="6G4L"/>
    </source>
</evidence>
<evidence type="ECO:0007744" key="32">
    <source>
        <dbReference type="PDB" id="6GBT"/>
    </source>
</evidence>
<evidence type="ECO:0007744" key="33">
    <source>
        <dbReference type="PDB" id="6GTB"/>
    </source>
</evidence>
<evidence type="ECO:0007744" key="34">
    <source>
        <dbReference type="PDB" id="6GTU"/>
    </source>
</evidence>
<evidence type="ECO:0007744" key="35">
    <source>
        <dbReference type="PDB" id="6H0M"/>
    </source>
</evidence>
<evidence type="ECO:0007744" key="36">
    <source>
        <dbReference type="PDB" id="6HNO"/>
    </source>
</evidence>
<evidence type="ECO:0007744" key="37">
    <source>
        <dbReference type="PDB" id="6QCK"/>
    </source>
</evidence>
<evidence type="ECO:0007744" key="38">
    <source>
        <dbReference type="PDB" id="6ZDE"/>
    </source>
</evidence>
<evidence type="ECO:0007744" key="39">
    <source>
        <dbReference type="PDB" id="6ZDI"/>
    </source>
</evidence>
<evidence type="ECO:0007744" key="40">
    <source>
        <dbReference type="PDB" id="6ZR6"/>
    </source>
</evidence>
<evidence type="ECO:0007744" key="41">
    <source>
        <dbReference type="PDB" id="6ZRA"/>
    </source>
</evidence>
<evidence type="ECO:0007744" key="42">
    <source>
        <dbReference type="PDB" id="6ZT2"/>
    </source>
</evidence>
<evidence type="ECO:0007829" key="43">
    <source>
        <dbReference type="PDB" id="6H0M"/>
    </source>
</evidence>
<sequence>MATGTRYAGKVVVVTGGGRGIGAGIVRAFVNSGARVVICDKDESGGRALEQELPGAVFILCDVTQEDDVKTLVSETIRRFGRLDCVVNNAGHHPPPQRPEETSAQGFRQLLELNLLGTYTLTKLALPYLRKSQGNVINISSLVGAIGQAQAVPYVATKGAVTAMTKALALDESPYGVRVNCISPGNIWTPLWEELAALMPDPRATIREGMLAQPLGRMGQPAEVGAAAVFLASEANFCTGIELLVTGGAELGYGCKASRSTPVDAPDIPS</sequence>
<accession>Q9BPX1</accession>
<accession>Q9UKU3</accession>
<keyword id="KW-0002">3D-structure</keyword>
<keyword id="KW-0119">Carbohydrate metabolism</keyword>
<keyword id="KW-0963">Cytoplasm</keyword>
<keyword id="KW-0294">Fucose metabolism</keyword>
<keyword id="KW-0443">Lipid metabolism</keyword>
<keyword id="KW-0520">NAD</keyword>
<keyword id="KW-0560">Oxidoreductase</keyword>
<keyword id="KW-1267">Proteomics identification</keyword>
<keyword id="KW-1185">Reference proteome</keyword>
<keyword id="KW-0753">Steroid metabolism</keyword>
<protein>
    <recommendedName>
        <fullName evidence="9">L-fucose dehydrogenase</fullName>
        <ecNumber evidence="8">1.1.1.122</ecNumber>
    </recommendedName>
    <alternativeName>
        <fullName>17-beta-hydroxysteroid dehydrogenase DHRS10</fullName>
    </alternativeName>
    <alternativeName>
        <fullName>Dehydrogenase/reductase SDR family member 10</fullName>
    </alternativeName>
    <alternativeName>
        <fullName>Retinal short-chain dehydrogenase/reductase retSDR3</fullName>
    </alternativeName>
    <alternativeName>
        <fullName>Short chain dehydrogenase/reductase family 47C member 1</fullName>
    </alternativeName>
</protein>
<organism>
    <name type="scientific">Homo sapiens</name>
    <name type="common">Human</name>
    <dbReference type="NCBI Taxonomy" id="9606"/>
    <lineage>
        <taxon>Eukaryota</taxon>
        <taxon>Metazoa</taxon>
        <taxon>Chordata</taxon>
        <taxon>Craniata</taxon>
        <taxon>Vertebrata</taxon>
        <taxon>Euteleostomi</taxon>
        <taxon>Mammalia</taxon>
        <taxon>Eutheria</taxon>
        <taxon>Euarchontoglires</taxon>
        <taxon>Primates</taxon>
        <taxon>Haplorrhini</taxon>
        <taxon>Catarrhini</taxon>
        <taxon>Hominidae</taxon>
        <taxon>Homo</taxon>
    </lineage>
</organism>
<comment type="function">
    <text evidence="3 8">Catalyzes the NAD(+)-dependent oxidation of L-fucose, yielding L-fucono-1,5-lactone, which rapidly converts spontaneously to L-fucone-1,4-lactone. Can also act on D-arabinose and L-galactose, with lower catalytic efficiency (PubMed:38944119). Does not use NADPH (PubMed:38944119). May be the initial enzyme of the L-fucose degradation pathway in mammals (PubMed:17067289, PubMed:38944119).</text>
</comment>
<comment type="catalytic activity">
    <reaction evidence="8">
        <text>L-fucose + NAD(+) = L-fucono-1,5-lactone + NADH + H(+)</text>
        <dbReference type="Rhea" id="RHEA:81515"/>
        <dbReference type="ChEBI" id="CHEBI:2181"/>
        <dbReference type="ChEBI" id="CHEBI:15378"/>
        <dbReference type="ChEBI" id="CHEBI:57540"/>
        <dbReference type="ChEBI" id="CHEBI:57945"/>
        <dbReference type="ChEBI" id="CHEBI:81457"/>
        <dbReference type="EC" id="1.1.1.122"/>
    </reaction>
    <physiologicalReaction direction="left-to-right" evidence="10">
        <dbReference type="Rhea" id="RHEA:81516"/>
    </physiologicalReaction>
</comment>
<comment type="catalytic activity">
    <reaction evidence="8">
        <text>D-arabinose + NAD(+) = D-arabinono-1,5-lactone + NADH + H(+)</text>
        <dbReference type="Rhea" id="RHEA:81519"/>
        <dbReference type="ChEBI" id="CHEBI:15378"/>
        <dbReference type="ChEBI" id="CHEBI:46994"/>
        <dbReference type="ChEBI" id="CHEBI:57540"/>
        <dbReference type="ChEBI" id="CHEBI:57945"/>
        <dbReference type="ChEBI" id="CHEBI:194242"/>
        <dbReference type="EC" id="1.1.1.122"/>
    </reaction>
    <physiologicalReaction direction="left-to-right" evidence="10">
        <dbReference type="Rhea" id="RHEA:81520"/>
    </physiologicalReaction>
</comment>
<comment type="catalytic activity">
    <reaction evidence="8">
        <text>L-galactose + NAD(+) = L-galactono-1,5-lactone + NADH + H(+)</text>
        <dbReference type="Rhea" id="RHEA:81523"/>
        <dbReference type="ChEBI" id="CHEBI:15378"/>
        <dbReference type="ChEBI" id="CHEBI:37619"/>
        <dbReference type="ChEBI" id="CHEBI:57540"/>
        <dbReference type="ChEBI" id="CHEBI:57945"/>
        <dbReference type="ChEBI" id="CHEBI:182410"/>
        <dbReference type="EC" id="1.1.1.122"/>
    </reaction>
    <physiologicalReaction direction="left-to-right" evidence="10">
        <dbReference type="Rhea" id="RHEA:81524"/>
    </physiologicalReaction>
</comment>
<comment type="biophysicochemical properties">
    <kinetics>
        <KM evidence="3">13.6 uM for 5-androstene-3beta,17beta-diol</KM>
        <KM evidence="3">5.6 uM for oestradiol</KM>
        <KM evidence="8">149 uM for NAD(+)</KM>
        <KM evidence="8">172 uM for L-fuctose</KM>
        <Vmax evidence="3">0.0025 umol/min/mg enzyme with beta-estradiol as substrate</Vmax>
        <Vmax evidence="3">0.0091 umol/min/mg enzyme with 5-androstene-3beta,17beta-diol as substrate</Vmax>
        <Vmax evidence="8">3.3E-4 umol/min/mg enzyme with beta-estradiol as substrate</Vmax>
        <Vmax evidence="8">27.2 umol/min/mg enzyme with L-fuctose as substrate</Vmax>
        <text evidence="3 7 8">kcat is 14.00 sec(-1) with L-fucose as substrate. kcat is 16.89 sec(-1) with NAD(+) as substrate (PubMed:38944119). kcat is 0.0003 sec(-1) with beta-estradiol as substrate. kcat is 0.00028sec(-1) with androst-5-en-3beta,17beta-diol as substrate (PubMed:30836176). kcat/KM=4878 min(-1) mM(-1) for L-fuctose. kcat/KM=13.6 min(-1) mM(-1) for beta-estradiol (PubMed:17067289).</text>
    </kinetics>
    <phDependence>
        <text>Optimum pH is 8.5 to 9.0.</text>
    </phDependence>
</comment>
<comment type="pathway">
    <text evidence="9">Carbohydrate degradation; L-fucose degradation.</text>
</comment>
<comment type="subunit">
    <text evidence="3 4">Homotetramer.</text>
</comment>
<comment type="interaction">
    <interactant intactId="EBI-742664">
        <id>Q9BPX1</id>
    </interactant>
    <interactant intactId="EBI-742928">
        <id>Q53H80</id>
        <label>AKIRIN2</label>
    </interactant>
    <organismsDiffer>false</organismsDiffer>
    <experiments>3</experiments>
</comment>
<comment type="interaction">
    <interactant intactId="EBI-742664">
        <id>Q9BPX1</id>
    </interactant>
    <interactant intactId="EBI-3509650">
        <id>Q9BX63</id>
        <label>BRIP1</label>
    </interactant>
    <organismsDiffer>false</organismsDiffer>
    <experiments>4</experiments>
</comment>
<comment type="interaction">
    <interactant intactId="EBI-742664">
        <id>Q9BPX1</id>
    </interactant>
    <interactant intactId="EBI-718700">
        <id>P35219</id>
        <label>CA8</label>
    </interactant>
    <organismsDiffer>false</organismsDiffer>
    <experiments>14</experiments>
</comment>
<comment type="interaction">
    <interactant intactId="EBI-742664">
        <id>Q9BPX1</id>
    </interactant>
    <interactant intactId="EBI-745859">
        <id>P55273</id>
        <label>CDKN2D</label>
    </interactant>
    <organismsDiffer>false</organismsDiffer>
    <experiments>8</experiments>
</comment>
<comment type="interaction">
    <interactant intactId="EBI-742664">
        <id>Q9BPX1</id>
    </interactant>
    <interactant intactId="EBI-742651">
        <id>P35638</id>
        <label>DDIT3</label>
    </interactant>
    <organismsDiffer>false</organismsDiffer>
    <experiments>6</experiments>
</comment>
<comment type="interaction">
    <interactant intactId="EBI-742664">
        <id>Q9BPX1</id>
    </interactant>
    <interactant intactId="EBI-10173632">
        <id>P35638-2</id>
        <label>DDIT3</label>
    </interactant>
    <organismsDiffer>false</organismsDiffer>
    <experiments>3</experiments>
</comment>
<comment type="interaction">
    <interactant intactId="EBI-742664">
        <id>Q9BPX1</id>
    </interactant>
    <interactant intactId="EBI-742664">
        <id>Q9BPX1</id>
        <label>HSD17B14</label>
    </interactant>
    <organismsDiffer>false</organismsDiffer>
    <experiments>8</experiments>
</comment>
<comment type="interaction">
    <interactant intactId="EBI-742664">
        <id>Q9BPX1</id>
    </interactant>
    <interactant intactId="EBI-6509505">
        <id>Q0VD86</id>
        <label>INCA1</label>
    </interactant>
    <organismsDiffer>false</organismsDiffer>
    <experiments>3</experiments>
</comment>
<comment type="interaction">
    <interactant intactId="EBI-742664">
        <id>Q9BPX1</id>
    </interactant>
    <interactant intactId="EBI-10242717">
        <id>Q53S70</id>
        <label>MGC4677</label>
    </interactant>
    <organismsDiffer>false</organismsDiffer>
    <experiments>3</experiments>
</comment>
<comment type="interaction">
    <interactant intactId="EBI-742664">
        <id>Q9BPX1</id>
    </interactant>
    <interactant intactId="EBI-1043398">
        <id>P29372</id>
        <label>MPG</label>
    </interactant>
    <organismsDiffer>false</organismsDiffer>
    <experiments>4</experiments>
</comment>
<comment type="interaction">
    <interactant intactId="EBI-742664">
        <id>Q9BPX1</id>
    </interactant>
    <interactant intactId="EBI-10695618">
        <id>P29372-4</id>
        <label>MPG</label>
    </interactant>
    <organismsDiffer>false</organismsDiffer>
    <experiments>3</experiments>
</comment>
<comment type="interaction">
    <interactant intactId="EBI-742664">
        <id>Q9BPX1</id>
    </interactant>
    <interactant intactId="EBI-740364">
        <id>Q9HC98</id>
        <label>NEK6</label>
    </interactant>
    <organismsDiffer>false</organismsDiffer>
    <experiments>3</experiments>
</comment>
<comment type="interaction">
    <interactant intactId="EBI-742664">
        <id>Q9BPX1</id>
    </interactant>
    <interactant intactId="EBI-11750983">
        <id>Q9HC98-4</id>
        <label>NEK6</label>
    </interactant>
    <organismsDiffer>false</organismsDiffer>
    <experiments>3</experiments>
</comment>
<comment type="interaction">
    <interactant intactId="EBI-742664">
        <id>Q9BPX1</id>
    </interactant>
    <interactant intactId="EBI-741158">
        <id>Q96HA8</id>
        <label>NTAQ1</label>
    </interactant>
    <organismsDiffer>false</organismsDiffer>
    <experiments>13</experiments>
</comment>
<comment type="interaction">
    <interactant intactId="EBI-742664">
        <id>Q9BPX1</id>
    </interactant>
    <interactant intactId="EBI-740486">
        <id>Q6ZVK8</id>
        <label>NUDT18</label>
    </interactant>
    <organismsDiffer>false</organismsDiffer>
    <experiments>3</experiments>
</comment>
<comment type="interaction">
    <interactant intactId="EBI-742664">
        <id>Q9BPX1</id>
    </interactant>
    <interactant intactId="EBI-16170539">
        <id>Q5T2D3</id>
        <label>OTUD3</label>
    </interactant>
    <organismsDiffer>false</organismsDiffer>
    <experiments>3</experiments>
</comment>
<comment type="interaction">
    <interactant intactId="EBI-742664">
        <id>Q9BPX1</id>
    </interactant>
    <interactant intactId="EBI-12339509">
        <id>Q96LB9</id>
        <label>PGLYRP3</label>
    </interactant>
    <organismsDiffer>false</organismsDiffer>
    <experiments>3</experiments>
</comment>
<comment type="interaction">
    <interactant intactId="EBI-742664">
        <id>Q9BPX1</id>
    </interactant>
    <interactant intactId="EBI-530034">
        <id>O43189</id>
        <label>PHF1</label>
    </interactant>
    <organismsDiffer>false</organismsDiffer>
    <experiments>8</experiments>
</comment>
<comment type="interaction">
    <interactant intactId="EBI-742664">
        <id>Q9BPX1</id>
    </interactant>
    <interactant intactId="EBI-79165">
        <id>Q9NRD5</id>
        <label>PICK1</label>
    </interactant>
    <organismsDiffer>false</organismsDiffer>
    <experiments>3</experiments>
</comment>
<comment type="interaction">
    <interactant intactId="EBI-742664">
        <id>Q9BPX1</id>
    </interactant>
    <interactant intactId="EBI-12326369">
        <id>Q9HB75-2</id>
        <label>PIDD1</label>
    </interactant>
    <organismsDiffer>false</organismsDiffer>
    <experiments>3</experiments>
</comment>
<comment type="interaction">
    <interactant intactId="EBI-742664">
        <id>Q9BPX1</id>
    </interactant>
    <interactant intactId="EBI-359352">
        <id>P25786</id>
        <label>PSMA1</label>
    </interactant>
    <organismsDiffer>false</organismsDiffer>
    <experiments>3</experiments>
</comment>
<comment type="interaction">
    <interactant intactId="EBI-742664">
        <id>Q9BPX1</id>
    </interactant>
    <interactant intactId="EBI-10829018">
        <id>Q04864-2</id>
        <label>REL</label>
    </interactant>
    <organismsDiffer>false</organismsDiffer>
    <experiments>3</experiments>
</comment>
<comment type="interaction">
    <interactant intactId="EBI-742664">
        <id>Q9BPX1</id>
    </interactant>
    <interactant intactId="EBI-1760638">
        <id>Q92966</id>
        <label>SNAPC3</label>
    </interactant>
    <organismsDiffer>false</organismsDiffer>
    <experiments>4</experiments>
</comment>
<comment type="interaction">
    <interactant intactId="EBI-742664">
        <id>Q9BPX1</id>
    </interactant>
    <interactant intactId="EBI-766589">
        <id>P09234</id>
        <label>SNRPC</label>
    </interactant>
    <organismsDiffer>false</organismsDiffer>
    <experiments>3</experiments>
</comment>
<comment type="interaction">
    <interactant intactId="EBI-742664">
        <id>Q9BPX1</id>
    </interactant>
    <interactant intactId="EBI-10246938">
        <id>Q5TAL4</id>
        <label>SNRPC</label>
    </interactant>
    <organismsDiffer>false</organismsDiffer>
    <experiments>3</experiments>
</comment>
<comment type="interaction">
    <interactant intactId="EBI-742664">
        <id>Q9BPX1</id>
    </interactant>
    <interactant intactId="EBI-10268630">
        <id>Q8N9Q2</id>
        <label>SREK1IP1</label>
    </interactant>
    <organismsDiffer>false</organismsDiffer>
    <experiments>5</experiments>
</comment>
<comment type="interaction">
    <interactant intactId="EBI-742664">
        <id>Q9BPX1</id>
    </interactant>
    <interactant intactId="EBI-8787464">
        <id>Q9NU19</id>
        <label>TBC1D22B</label>
    </interactant>
    <organismsDiffer>false</organismsDiffer>
    <experiments>7</experiments>
</comment>
<comment type="interaction">
    <interactant intactId="EBI-742664">
        <id>Q9BPX1</id>
    </interactant>
    <interactant intactId="EBI-10242677">
        <id>Q53NU3</id>
        <label>tmp_locus_54</label>
    </interactant>
    <organismsDiffer>false</organismsDiffer>
    <experiments>3</experiments>
</comment>
<comment type="subcellular location">
    <subcellularLocation>
        <location evidence="3">Cytoplasm</location>
    </subcellularLocation>
</comment>
<comment type="tissue specificity">
    <text evidence="2 3">Highly expressed in brain, placenta, liver and kidney.</text>
</comment>
<comment type="similarity">
    <text evidence="9">Belongs to the short-chain dehydrogenases/reductases (SDR) family.</text>
</comment>
<comment type="caution">
    <text evidence="3 8">Was reported as a 17-beta-hydroxysteroid dehydrogenase that catalyzes estradiol and testosterone oxidation in the C17-hydroxyl group to form estrone and androstenedione, respectively (in vitro). However, HSD17B14 is very inefficient in oxidizing steroids, testosterone, suggesting that steroids cannot be physiological substrates for HSD17B14.</text>
</comment>
<name>DHB14_HUMAN</name>